<organism>
    <name type="scientific">Mycobacterium tuberculosis (strain CDC 1551 / Oshkosh)</name>
    <dbReference type="NCBI Taxonomy" id="83331"/>
    <lineage>
        <taxon>Bacteria</taxon>
        <taxon>Bacillati</taxon>
        <taxon>Actinomycetota</taxon>
        <taxon>Actinomycetes</taxon>
        <taxon>Mycobacteriales</taxon>
        <taxon>Mycobacteriaceae</taxon>
        <taxon>Mycobacterium</taxon>
        <taxon>Mycobacterium tuberculosis complex</taxon>
    </lineage>
</organism>
<proteinExistence type="predicted"/>
<protein>
    <recommendedName>
        <fullName>Uncharacterized protein MT1527</fullName>
    </recommendedName>
</protein>
<feature type="chain" id="PRO_0000427403" description="Uncharacterized protein MT1527">
    <location>
        <begin position="1"/>
        <end position="317"/>
    </location>
</feature>
<name>Y1480_MYCTO</name>
<evidence type="ECO:0000305" key="1"/>
<comment type="similarity">
    <text evidence="1">To M.avium MAV169.</text>
</comment>
<comment type="sequence caution" evidence="1">
    <conflict type="erroneous initiation">
        <sequence resource="EMBL-CDS" id="AAK45792"/>
    </conflict>
</comment>
<reference key="1">
    <citation type="journal article" date="2002" name="J. Bacteriol.">
        <title>Whole-genome comparison of Mycobacterium tuberculosis clinical and laboratory strains.</title>
        <authorList>
            <person name="Fleischmann R.D."/>
            <person name="Alland D."/>
            <person name="Eisen J.A."/>
            <person name="Carpenter L."/>
            <person name="White O."/>
            <person name="Peterson J.D."/>
            <person name="DeBoy R.T."/>
            <person name="Dodson R.J."/>
            <person name="Gwinn M.L."/>
            <person name="Haft D.H."/>
            <person name="Hickey E.K."/>
            <person name="Kolonay J.F."/>
            <person name="Nelson W.C."/>
            <person name="Umayam L.A."/>
            <person name="Ermolaeva M.D."/>
            <person name="Salzberg S.L."/>
            <person name="Delcher A."/>
            <person name="Utterback T.R."/>
            <person name="Weidman J.F."/>
            <person name="Khouri H.M."/>
            <person name="Gill J."/>
            <person name="Mikula A."/>
            <person name="Bishai W."/>
            <person name="Jacobs W.R. Jr."/>
            <person name="Venter J.C."/>
            <person name="Fraser C.M."/>
        </authorList>
    </citation>
    <scope>NUCLEOTIDE SEQUENCE [LARGE SCALE GENOMIC DNA]</scope>
    <source>
        <strain>CDC 1551 / Oshkosh</strain>
    </source>
</reference>
<gene>
    <name type="ordered locus">MT1527</name>
</gene>
<sequence length="317" mass="34333">MTESKAPAVVHPPSMLRGDIDDPKLAAALRTLELTVKQKLDGVLHGDHLGLIPGPGSEPGESRLYQPGDDVRRMDWAVTARTTHPHVRQMIADRELETWLVVDMSASLDFGTACCEKRDLAVAAAAAITFLNSGGGNRLGALIANGAAMTRVPARTGRQHQHTMLRTIATMPQAPAGVRGDLAVAIDALRRPERRRGMAVIISDFLGPINWMRPLRAIAARHEVLAIEVLDPRDVELPDVGDVVLQDAESGVVREFSIDPALRDDFARAAAAHRADVARTIRGCGAPLLSLRTDRDWLADIVRFVASRRRGALAGHQ</sequence>
<accession>P9WLX4</accession>
<accession>L0T8D9</accession>
<accession>O53171</accession>
<accession>P64853</accession>
<accession>P71761</accession>
<dbReference type="EMBL" id="AE000516">
    <property type="protein sequence ID" value="AAK45792.1"/>
    <property type="status" value="ALT_INIT"/>
    <property type="molecule type" value="Genomic_DNA"/>
</dbReference>
<dbReference type="PIR" id="C70874">
    <property type="entry name" value="C70874"/>
</dbReference>
<dbReference type="RefSeq" id="WP_003407529.1">
    <property type="nucleotide sequence ID" value="NZ_KK341227.1"/>
</dbReference>
<dbReference type="SMR" id="P9WLX4"/>
<dbReference type="KEGG" id="mtc:MT1527"/>
<dbReference type="PATRIC" id="fig|83331.31.peg.1642"/>
<dbReference type="HOGENOM" id="CLU_054927_2_1_11"/>
<dbReference type="Proteomes" id="UP000001020">
    <property type="component" value="Chromosome"/>
</dbReference>
<dbReference type="InterPro" id="IPR002881">
    <property type="entry name" value="DUF58"/>
</dbReference>
<dbReference type="InterPro" id="IPR036465">
    <property type="entry name" value="vWFA_dom_sf"/>
</dbReference>
<dbReference type="PANTHER" id="PTHR33608">
    <property type="entry name" value="BLL2464 PROTEIN"/>
    <property type="match status" value="1"/>
</dbReference>
<dbReference type="PANTHER" id="PTHR33608:SF6">
    <property type="entry name" value="BLL2464 PROTEIN"/>
    <property type="match status" value="1"/>
</dbReference>
<dbReference type="Pfam" id="PF01882">
    <property type="entry name" value="DUF58"/>
    <property type="match status" value="1"/>
</dbReference>
<dbReference type="SUPFAM" id="SSF53300">
    <property type="entry name" value="vWA-like"/>
    <property type="match status" value="1"/>
</dbReference>
<keyword id="KW-1185">Reference proteome</keyword>